<sequence>MQIILLEKVANLGNLGDIVKVKDGYARNFLIPNRKARRATKEAIAEFEVRRAELEKVAAEKLAASQAVGEKLNGQSFEITQKSGVDGRLFGSVTNGDIAELLKKAGYEVEKLQVRMPEGPLKMIGEHTVQVALHTDVVVDVTINVIGDHA</sequence>
<organism>
    <name type="scientific">Burkholderia ambifaria (strain MC40-6)</name>
    <dbReference type="NCBI Taxonomy" id="398577"/>
    <lineage>
        <taxon>Bacteria</taxon>
        <taxon>Pseudomonadati</taxon>
        <taxon>Pseudomonadota</taxon>
        <taxon>Betaproteobacteria</taxon>
        <taxon>Burkholderiales</taxon>
        <taxon>Burkholderiaceae</taxon>
        <taxon>Burkholderia</taxon>
        <taxon>Burkholderia cepacia complex</taxon>
    </lineage>
</organism>
<evidence type="ECO:0000255" key="1">
    <source>
        <dbReference type="HAMAP-Rule" id="MF_00503"/>
    </source>
</evidence>
<evidence type="ECO:0000305" key="2"/>
<gene>
    <name evidence="1" type="primary">rplI</name>
    <name type="ordered locus">BamMC406_1780</name>
</gene>
<accession>B1YRJ1</accession>
<feature type="chain" id="PRO_1000126877" description="Large ribosomal subunit protein bL9">
    <location>
        <begin position="1"/>
        <end position="150"/>
    </location>
</feature>
<keyword id="KW-0687">Ribonucleoprotein</keyword>
<keyword id="KW-0689">Ribosomal protein</keyword>
<keyword id="KW-0694">RNA-binding</keyword>
<keyword id="KW-0699">rRNA-binding</keyword>
<dbReference type="EMBL" id="CP001025">
    <property type="protein sequence ID" value="ACB64265.1"/>
    <property type="molecule type" value="Genomic_DNA"/>
</dbReference>
<dbReference type="RefSeq" id="WP_006755438.1">
    <property type="nucleotide sequence ID" value="NC_010551.1"/>
</dbReference>
<dbReference type="SMR" id="B1YRJ1"/>
<dbReference type="GeneID" id="93085986"/>
<dbReference type="KEGG" id="bac:BamMC406_1780"/>
<dbReference type="HOGENOM" id="CLU_078938_4_1_4"/>
<dbReference type="OrthoDB" id="9788336at2"/>
<dbReference type="Proteomes" id="UP000001680">
    <property type="component" value="Chromosome 1"/>
</dbReference>
<dbReference type="GO" id="GO:1990904">
    <property type="term" value="C:ribonucleoprotein complex"/>
    <property type="evidence" value="ECO:0007669"/>
    <property type="project" value="UniProtKB-KW"/>
</dbReference>
<dbReference type="GO" id="GO:0005840">
    <property type="term" value="C:ribosome"/>
    <property type="evidence" value="ECO:0007669"/>
    <property type="project" value="UniProtKB-KW"/>
</dbReference>
<dbReference type="GO" id="GO:0019843">
    <property type="term" value="F:rRNA binding"/>
    <property type="evidence" value="ECO:0007669"/>
    <property type="project" value="UniProtKB-UniRule"/>
</dbReference>
<dbReference type="GO" id="GO:0003735">
    <property type="term" value="F:structural constituent of ribosome"/>
    <property type="evidence" value="ECO:0007669"/>
    <property type="project" value="InterPro"/>
</dbReference>
<dbReference type="GO" id="GO:0006412">
    <property type="term" value="P:translation"/>
    <property type="evidence" value="ECO:0007669"/>
    <property type="project" value="UniProtKB-UniRule"/>
</dbReference>
<dbReference type="Gene3D" id="3.10.430.100">
    <property type="entry name" value="Ribosomal protein L9, C-terminal domain"/>
    <property type="match status" value="1"/>
</dbReference>
<dbReference type="Gene3D" id="3.40.5.10">
    <property type="entry name" value="Ribosomal protein L9, N-terminal domain"/>
    <property type="match status" value="1"/>
</dbReference>
<dbReference type="HAMAP" id="MF_00503">
    <property type="entry name" value="Ribosomal_bL9"/>
    <property type="match status" value="1"/>
</dbReference>
<dbReference type="InterPro" id="IPR000244">
    <property type="entry name" value="Ribosomal_bL9"/>
</dbReference>
<dbReference type="InterPro" id="IPR009027">
    <property type="entry name" value="Ribosomal_bL9/RNase_H1_N"/>
</dbReference>
<dbReference type="InterPro" id="IPR020594">
    <property type="entry name" value="Ribosomal_bL9_bac/chp"/>
</dbReference>
<dbReference type="InterPro" id="IPR020069">
    <property type="entry name" value="Ribosomal_bL9_C"/>
</dbReference>
<dbReference type="InterPro" id="IPR036791">
    <property type="entry name" value="Ribosomal_bL9_C_sf"/>
</dbReference>
<dbReference type="InterPro" id="IPR020070">
    <property type="entry name" value="Ribosomal_bL9_N"/>
</dbReference>
<dbReference type="InterPro" id="IPR036935">
    <property type="entry name" value="Ribosomal_bL9_N_sf"/>
</dbReference>
<dbReference type="NCBIfam" id="TIGR00158">
    <property type="entry name" value="L9"/>
    <property type="match status" value="1"/>
</dbReference>
<dbReference type="PANTHER" id="PTHR21368">
    <property type="entry name" value="50S RIBOSOMAL PROTEIN L9"/>
    <property type="match status" value="1"/>
</dbReference>
<dbReference type="Pfam" id="PF03948">
    <property type="entry name" value="Ribosomal_L9_C"/>
    <property type="match status" value="1"/>
</dbReference>
<dbReference type="Pfam" id="PF01281">
    <property type="entry name" value="Ribosomal_L9_N"/>
    <property type="match status" value="1"/>
</dbReference>
<dbReference type="SUPFAM" id="SSF55658">
    <property type="entry name" value="L9 N-domain-like"/>
    <property type="match status" value="1"/>
</dbReference>
<dbReference type="SUPFAM" id="SSF55653">
    <property type="entry name" value="Ribosomal protein L9 C-domain"/>
    <property type="match status" value="1"/>
</dbReference>
<dbReference type="PROSITE" id="PS00651">
    <property type="entry name" value="RIBOSOMAL_L9"/>
    <property type="match status" value="1"/>
</dbReference>
<protein>
    <recommendedName>
        <fullName evidence="1">Large ribosomal subunit protein bL9</fullName>
    </recommendedName>
    <alternativeName>
        <fullName evidence="2">50S ribosomal protein L9</fullName>
    </alternativeName>
</protein>
<comment type="function">
    <text evidence="1">Binds to the 23S rRNA.</text>
</comment>
<comment type="similarity">
    <text evidence="1">Belongs to the bacterial ribosomal protein bL9 family.</text>
</comment>
<reference key="1">
    <citation type="submission" date="2008-04" db="EMBL/GenBank/DDBJ databases">
        <title>Complete sequence of chromosome 1 of Burkholderia ambifaria MC40-6.</title>
        <authorList>
            <person name="Copeland A."/>
            <person name="Lucas S."/>
            <person name="Lapidus A."/>
            <person name="Glavina del Rio T."/>
            <person name="Dalin E."/>
            <person name="Tice H."/>
            <person name="Pitluck S."/>
            <person name="Chain P."/>
            <person name="Malfatti S."/>
            <person name="Shin M."/>
            <person name="Vergez L."/>
            <person name="Lang D."/>
            <person name="Schmutz J."/>
            <person name="Larimer F."/>
            <person name="Land M."/>
            <person name="Hauser L."/>
            <person name="Kyrpides N."/>
            <person name="Lykidis A."/>
            <person name="Ramette A."/>
            <person name="Konstantinidis K."/>
            <person name="Tiedje J."/>
            <person name="Richardson P."/>
        </authorList>
    </citation>
    <scope>NUCLEOTIDE SEQUENCE [LARGE SCALE GENOMIC DNA]</scope>
    <source>
        <strain>MC40-6</strain>
    </source>
</reference>
<name>RL9_BURA4</name>
<proteinExistence type="inferred from homology"/>